<evidence type="ECO:0000255" key="1">
    <source>
        <dbReference type="HAMAP-Rule" id="MF_00272"/>
    </source>
</evidence>
<evidence type="ECO:0000255" key="2">
    <source>
        <dbReference type="PROSITE-ProRule" id="PRU01066"/>
    </source>
</evidence>
<feature type="chain" id="PRO_1000114557" description="Glycine cleavage system H protein">
    <location>
        <begin position="1"/>
        <end position="126"/>
    </location>
</feature>
<feature type="domain" description="Lipoyl-binding" evidence="2">
    <location>
        <begin position="22"/>
        <end position="103"/>
    </location>
</feature>
<feature type="modified residue" description="N6-lipoyllysine" evidence="1">
    <location>
        <position position="63"/>
    </location>
</feature>
<keyword id="KW-0450">Lipoyl</keyword>
<keyword id="KW-1185">Reference proteome</keyword>
<proteinExistence type="inferred from homology"/>
<organism>
    <name type="scientific">Thermoanaerobacter pseudethanolicus (strain ATCC 33223 / 39E)</name>
    <name type="common">Clostridium thermohydrosulfuricum</name>
    <dbReference type="NCBI Taxonomy" id="340099"/>
    <lineage>
        <taxon>Bacteria</taxon>
        <taxon>Bacillati</taxon>
        <taxon>Bacillota</taxon>
        <taxon>Clostridia</taxon>
        <taxon>Thermoanaerobacterales</taxon>
        <taxon>Thermoanaerobacteraceae</taxon>
        <taxon>Thermoanaerobacter</taxon>
    </lineage>
</organism>
<gene>
    <name evidence="1" type="primary">gcvH</name>
    <name type="ordered locus">Teth39_1989</name>
</gene>
<sequence>MEVIEGLYYSKDHEWVKVEGDKAYIGITDYAQHSLGNIVYIELPEVGAELSAGDVLGVVESVKAASDVYTPVDGKVLEVNNAIVDDPSLVNNDPYGSWMALVELKDKSQLDNLMTAEEYKKFLDEE</sequence>
<dbReference type="EMBL" id="CP000924">
    <property type="protein sequence ID" value="ABY95615.1"/>
    <property type="molecule type" value="Genomic_DNA"/>
</dbReference>
<dbReference type="RefSeq" id="WP_003867063.1">
    <property type="nucleotide sequence ID" value="NC_010321.1"/>
</dbReference>
<dbReference type="SMR" id="B0KD96"/>
<dbReference type="STRING" id="340099.Teth39_1989"/>
<dbReference type="KEGG" id="tpd:Teth39_1989"/>
<dbReference type="eggNOG" id="COG0509">
    <property type="taxonomic scope" value="Bacteria"/>
</dbReference>
<dbReference type="HOGENOM" id="CLU_097408_2_2_9"/>
<dbReference type="Proteomes" id="UP000002156">
    <property type="component" value="Chromosome"/>
</dbReference>
<dbReference type="GO" id="GO:0005829">
    <property type="term" value="C:cytosol"/>
    <property type="evidence" value="ECO:0007669"/>
    <property type="project" value="TreeGrafter"/>
</dbReference>
<dbReference type="GO" id="GO:0005960">
    <property type="term" value="C:glycine cleavage complex"/>
    <property type="evidence" value="ECO:0007669"/>
    <property type="project" value="InterPro"/>
</dbReference>
<dbReference type="GO" id="GO:0019464">
    <property type="term" value="P:glycine decarboxylation via glycine cleavage system"/>
    <property type="evidence" value="ECO:0007669"/>
    <property type="project" value="UniProtKB-UniRule"/>
</dbReference>
<dbReference type="CDD" id="cd06848">
    <property type="entry name" value="GCS_H"/>
    <property type="match status" value="1"/>
</dbReference>
<dbReference type="Gene3D" id="2.40.50.100">
    <property type="match status" value="1"/>
</dbReference>
<dbReference type="HAMAP" id="MF_00272">
    <property type="entry name" value="GcvH"/>
    <property type="match status" value="1"/>
</dbReference>
<dbReference type="InterPro" id="IPR003016">
    <property type="entry name" value="2-oxoA_DH_lipoyl-BS"/>
</dbReference>
<dbReference type="InterPro" id="IPR000089">
    <property type="entry name" value="Biotin_lipoyl"/>
</dbReference>
<dbReference type="InterPro" id="IPR002930">
    <property type="entry name" value="GCV_H"/>
</dbReference>
<dbReference type="InterPro" id="IPR033753">
    <property type="entry name" value="GCV_H/Fam206"/>
</dbReference>
<dbReference type="InterPro" id="IPR017453">
    <property type="entry name" value="GCV_H_sub"/>
</dbReference>
<dbReference type="InterPro" id="IPR011053">
    <property type="entry name" value="Single_hybrid_motif"/>
</dbReference>
<dbReference type="NCBIfam" id="TIGR00527">
    <property type="entry name" value="gcvH"/>
    <property type="match status" value="1"/>
</dbReference>
<dbReference type="NCBIfam" id="NF002270">
    <property type="entry name" value="PRK01202.1"/>
    <property type="match status" value="1"/>
</dbReference>
<dbReference type="PANTHER" id="PTHR11715">
    <property type="entry name" value="GLYCINE CLEAVAGE SYSTEM H PROTEIN"/>
    <property type="match status" value="1"/>
</dbReference>
<dbReference type="PANTHER" id="PTHR11715:SF3">
    <property type="entry name" value="GLYCINE CLEAVAGE SYSTEM H PROTEIN-RELATED"/>
    <property type="match status" value="1"/>
</dbReference>
<dbReference type="Pfam" id="PF01597">
    <property type="entry name" value="GCV_H"/>
    <property type="match status" value="1"/>
</dbReference>
<dbReference type="SUPFAM" id="SSF51230">
    <property type="entry name" value="Single hybrid motif"/>
    <property type="match status" value="1"/>
</dbReference>
<dbReference type="PROSITE" id="PS50968">
    <property type="entry name" value="BIOTINYL_LIPOYL"/>
    <property type="match status" value="1"/>
</dbReference>
<dbReference type="PROSITE" id="PS00189">
    <property type="entry name" value="LIPOYL"/>
    <property type="match status" value="1"/>
</dbReference>
<protein>
    <recommendedName>
        <fullName evidence="1">Glycine cleavage system H protein</fullName>
    </recommendedName>
</protein>
<comment type="function">
    <text evidence="1">The glycine cleavage system catalyzes the degradation of glycine. The H protein shuttles the methylamine group of glycine from the P protein to the T protein.</text>
</comment>
<comment type="cofactor">
    <cofactor evidence="1">
        <name>(R)-lipoate</name>
        <dbReference type="ChEBI" id="CHEBI:83088"/>
    </cofactor>
    <text evidence="1">Binds 1 lipoyl cofactor covalently.</text>
</comment>
<comment type="subunit">
    <text evidence="1">The glycine cleavage system is composed of four proteins: P, T, L and H.</text>
</comment>
<comment type="similarity">
    <text evidence="1">Belongs to the GcvH family.</text>
</comment>
<accession>B0KD96</accession>
<reference key="1">
    <citation type="submission" date="2008-01" db="EMBL/GenBank/DDBJ databases">
        <title>Complete sequence of Thermoanaerobacter pseudethanolicus 39E.</title>
        <authorList>
            <person name="Copeland A."/>
            <person name="Lucas S."/>
            <person name="Lapidus A."/>
            <person name="Barry K."/>
            <person name="Glavina del Rio T."/>
            <person name="Dalin E."/>
            <person name="Tice H."/>
            <person name="Pitluck S."/>
            <person name="Bruce D."/>
            <person name="Goodwin L."/>
            <person name="Saunders E."/>
            <person name="Brettin T."/>
            <person name="Detter J.C."/>
            <person name="Han C."/>
            <person name="Schmutz J."/>
            <person name="Larimer F."/>
            <person name="Land M."/>
            <person name="Hauser L."/>
            <person name="Kyrpides N."/>
            <person name="Lykidis A."/>
            <person name="Hemme C."/>
            <person name="Fields M.W."/>
            <person name="He Z."/>
            <person name="Zhou J."/>
            <person name="Richardson P."/>
        </authorList>
    </citation>
    <scope>NUCLEOTIDE SEQUENCE [LARGE SCALE GENOMIC DNA]</scope>
    <source>
        <strain>ATCC 33223 / DSM 2355 / 39E</strain>
    </source>
</reference>
<name>GCSH_THEP3</name>